<gene>
    <name type="ORF">L5</name>
</gene>
<comment type="function">
    <text evidence="2">Forms spikes that protrude from each vertex of the icosahedral capsid. Interacts with host receptor CD46 to provide virion initial attachment to target cell. Fiber proteins are shed during virus entry, when virus is still at the cell surface.</text>
</comment>
<comment type="subunit">
    <text evidence="1">Homotrimer. Interacts with host receptor CD46. Interacts (via N-terminal tail region) with pentons (By similarity).</text>
</comment>
<comment type="subcellular location">
    <subcellularLocation>
        <location evidence="1">Virion</location>
    </subcellularLocation>
    <subcellularLocation>
        <location evidence="1">Host nucleus</location>
    </subcellularLocation>
    <text evidence="1">Anchored to the pentons, protrudes from the virion surface.</text>
</comment>
<comment type="induction">
    <text>Expressed in the late phase of the viral replicative cycle.</text>
</comment>
<comment type="domain">
    <text evidence="1">The tail region anchors the fiber to penton base capsomers, whereas the shaft, built from several repeated motifs, allows the knob to protrude from the virion.</text>
</comment>
<comment type="miscellaneous">
    <text evidence="1">All late proteins expressed from the major late promoter are produced by alternative splicing and alternative polyadenylation of the same gene giving rise to non-overlapping ORFs. A leader sequence is present in the N-terminus of all these mRNAs and is recognized by the viral shutoff protein to provide expression although conventional translation via ribosome scanning from the cap has been shut off in the host cell (By similarity).</text>
</comment>
<comment type="similarity">
    <text evidence="3">Belongs to the adenoviridae fiber family.</text>
</comment>
<comment type="sequence caution" evidence="3">
    <conflict type="erroneous initiation">
        <sequence resource="EMBL-CDS" id="AAA53254"/>
    </conflict>
</comment>
<dbReference type="EMBL" id="M23696">
    <property type="protein sequence ID" value="AAA53254.1"/>
    <property type="status" value="ALT_INIT"/>
    <property type="molecule type" value="Genomic_DNA"/>
</dbReference>
<dbReference type="PIR" id="F31830">
    <property type="entry name" value="ERADF7"/>
</dbReference>
<dbReference type="PDB" id="3EXW">
    <property type="method" value="X-ray"/>
    <property type="resolution" value="1.75 A"/>
    <property type="chains" value="A/B/C=135-343"/>
</dbReference>
<dbReference type="PDB" id="7AGF">
    <property type="method" value="EM"/>
    <property type="resolution" value="3.10 A"/>
    <property type="chains" value="A/B/C=135-343"/>
</dbReference>
<dbReference type="PDB" id="7AGG">
    <property type="method" value="EM"/>
    <property type="resolution" value="3.30 A"/>
    <property type="chains" value="A/B/C=135-343"/>
</dbReference>
<dbReference type="PDBsum" id="3EXW"/>
<dbReference type="PDBsum" id="7AGF"/>
<dbReference type="PDBsum" id="7AGG"/>
<dbReference type="SMR" id="P15141"/>
<dbReference type="EvolutionaryTrace" id="P15141"/>
<dbReference type="GO" id="GO:0042025">
    <property type="term" value="C:host cell nucleus"/>
    <property type="evidence" value="ECO:0007669"/>
    <property type="project" value="UniProtKB-SubCell"/>
</dbReference>
<dbReference type="GO" id="GO:0019028">
    <property type="term" value="C:viral capsid"/>
    <property type="evidence" value="ECO:0007669"/>
    <property type="project" value="UniProtKB-KW"/>
</dbReference>
<dbReference type="GO" id="GO:0098671">
    <property type="term" value="P:adhesion receptor-mediated virion attachment to host cell"/>
    <property type="evidence" value="ECO:0007669"/>
    <property type="project" value="UniProtKB-KW"/>
</dbReference>
<dbReference type="GO" id="GO:0007155">
    <property type="term" value="P:cell adhesion"/>
    <property type="evidence" value="ECO:0007669"/>
    <property type="project" value="InterPro"/>
</dbReference>
<dbReference type="GO" id="GO:0046718">
    <property type="term" value="P:symbiont entry into host cell"/>
    <property type="evidence" value="ECO:0007669"/>
    <property type="project" value="UniProtKB-KW"/>
</dbReference>
<dbReference type="Gene3D" id="2.60.90.10">
    <property type="entry name" value="Adenovirus pIV-related, attachment domain"/>
    <property type="match status" value="1"/>
</dbReference>
<dbReference type="Gene3D" id="2.10.25.20">
    <property type="entry name" value="reovirus attachment protein sigma1, domain 1"/>
    <property type="match status" value="1"/>
</dbReference>
<dbReference type="InterPro" id="IPR000931">
    <property type="entry name" value="Adeno_fibre"/>
</dbReference>
<dbReference type="InterPro" id="IPR000978">
    <property type="entry name" value="Adeno_fibre_knob"/>
</dbReference>
<dbReference type="InterPro" id="IPR000939">
    <property type="entry name" value="Adenobir_fibre_prot_rpt/shaft"/>
</dbReference>
<dbReference type="InterPro" id="IPR008982">
    <property type="entry name" value="Adenovirus_pIV-like_att"/>
</dbReference>
<dbReference type="InterPro" id="IPR009013">
    <property type="entry name" value="Attachment_protein_shaft_sf"/>
</dbReference>
<dbReference type="Pfam" id="PF00541">
    <property type="entry name" value="Adeno_knob"/>
    <property type="match status" value="1"/>
</dbReference>
<dbReference type="Pfam" id="PF00608">
    <property type="entry name" value="Adeno_shaft"/>
    <property type="match status" value="2"/>
</dbReference>
<dbReference type="PRINTS" id="PR00307">
    <property type="entry name" value="ADENOVSFIBRE"/>
</dbReference>
<dbReference type="SUPFAM" id="SSF51225">
    <property type="entry name" value="Fibre shaft of virus attachment proteins"/>
    <property type="match status" value="1"/>
</dbReference>
<dbReference type="SUPFAM" id="SSF49835">
    <property type="entry name" value="Virus attachment protein globular domain"/>
    <property type="match status" value="1"/>
</dbReference>
<name>SPIKE_ADE07</name>
<reference key="1">
    <citation type="journal article" date="1988" name="Virology">
        <title>Characterization of the early region 3 and fiber genes of Ad7.</title>
        <authorList>
            <person name="Hong J.S."/>
            <person name="Mullis K.G."/>
            <person name="Engler J.A."/>
        </authorList>
    </citation>
    <scope>NUCLEOTIDE SEQUENCE [GENOMIC DNA]</scope>
    <source>
        <strain>Gomen</strain>
    </source>
</reference>
<reference key="2">
    <citation type="journal article" date="2001" name="J. Virol.">
        <title>Adenovirus serotype 7 retention in a late endosomal compartment prior to cytosol escape is modulated by fiber protein.</title>
        <authorList>
            <person name="Miyazawa N."/>
            <person name="Crystal R.G."/>
            <person name="Leopold P.L."/>
        </authorList>
    </citation>
    <scope>FUNCTION</scope>
</reference>
<reference key="3">
    <citation type="journal article" date="2012" name="J. Virol.">
        <title>Avidity binding of human adenovirus serotypes 3 and 7 to the membrane cofactor CD46 triggers infection.</title>
        <authorList>
            <person name="Trinh H.V."/>
            <person name="Lesage G."/>
            <person name="Chennamparampil V."/>
            <person name="Vollenweider B."/>
            <person name="Burckhardt C.J."/>
            <person name="Schauer S."/>
            <person name="Havenga M."/>
            <person name="Greber U.F."/>
            <person name="Hemmi S."/>
        </authorList>
    </citation>
    <scope>INTERACTION WITH HUMAN CD46</scope>
</reference>
<accession>P15141</accession>
<proteinExistence type="evidence at protein level"/>
<evidence type="ECO:0000250" key="1"/>
<evidence type="ECO:0000269" key="2">
    <source>
    </source>
</evidence>
<evidence type="ECO:0000305" key="3"/>
<evidence type="ECO:0007829" key="4">
    <source>
        <dbReference type="PDB" id="3EXW"/>
    </source>
</evidence>
<evidence type="ECO:0007829" key="5">
    <source>
        <dbReference type="PDB" id="7AGF"/>
    </source>
</evidence>
<protein>
    <recommendedName>
        <fullName>Fiber protein</fullName>
        <shortName>SPIKE</shortName>
    </recommendedName>
    <alternativeName>
        <fullName>Protein IV</fullName>
    </alternativeName>
</protein>
<organismHost>
    <name type="scientific">Homo sapiens</name>
    <name type="common">Human</name>
    <dbReference type="NCBI Taxonomy" id="9606"/>
</organismHost>
<feature type="chain" id="PRO_0000221790" description="Fiber protein">
    <location>
        <begin position="1"/>
        <end position="343"/>
    </location>
</feature>
<feature type="helix" evidence="4">
    <location>
        <begin position="147"/>
        <end position="150"/>
    </location>
</feature>
<feature type="strand" evidence="4">
    <location>
        <begin position="151"/>
        <end position="153"/>
    </location>
</feature>
<feature type="strand" evidence="4">
    <location>
        <begin position="174"/>
        <end position="183"/>
    </location>
</feature>
<feature type="strand" evidence="4">
    <location>
        <begin position="186"/>
        <end position="195"/>
    </location>
</feature>
<feature type="helix" evidence="4">
    <location>
        <begin position="198"/>
        <end position="201"/>
    </location>
</feature>
<feature type="helix" evidence="4">
    <location>
        <begin position="202"/>
        <end position="205"/>
    </location>
</feature>
<feature type="strand" evidence="4">
    <location>
        <begin position="207"/>
        <end position="217"/>
    </location>
</feature>
<feature type="turn" evidence="4">
    <location>
        <begin position="225"/>
        <end position="227"/>
    </location>
</feature>
<feature type="strand" evidence="4">
    <location>
        <begin position="228"/>
        <end position="230"/>
    </location>
</feature>
<feature type="helix" evidence="4">
    <location>
        <begin position="250"/>
        <end position="253"/>
    </location>
</feature>
<feature type="turn" evidence="4">
    <location>
        <begin position="257"/>
        <end position="259"/>
    </location>
</feature>
<feature type="helix" evidence="4">
    <location>
        <begin position="265"/>
        <end position="271"/>
    </location>
</feature>
<feature type="strand" evidence="4">
    <location>
        <begin position="272"/>
        <end position="280"/>
    </location>
</feature>
<feature type="strand" evidence="4">
    <location>
        <begin position="286"/>
        <end position="298"/>
    </location>
</feature>
<feature type="strand" evidence="5">
    <location>
        <begin position="300"/>
        <end position="303"/>
    </location>
</feature>
<feature type="strand" evidence="4">
    <location>
        <begin position="305"/>
        <end position="315"/>
    </location>
</feature>
<feature type="turn" evidence="4">
    <location>
        <begin position="323"/>
        <end position="325"/>
    </location>
</feature>
<feature type="strand" evidence="4">
    <location>
        <begin position="334"/>
        <end position="340"/>
    </location>
</feature>
<organism>
    <name type="scientific">Human adenovirus B serotype 7</name>
    <name type="common">HAdV-7</name>
    <name type="synonym">Human adenovirus 7</name>
    <dbReference type="NCBI Taxonomy" id="10519"/>
    <lineage>
        <taxon>Viruses</taxon>
        <taxon>Varidnaviria</taxon>
        <taxon>Bamfordvirae</taxon>
        <taxon>Preplasmiviricota</taxon>
        <taxon>Tectiliviricetes</taxon>
        <taxon>Rowavirales</taxon>
        <taxon>Adenoviridae</taxon>
        <taxon>Mastadenovirus</taxon>
        <taxon>Human mastadenovirus B</taxon>
    </lineage>
</organism>
<sequence>MSNFNSSPVPTIFMSFFQMTKRVRLSDSFNPVYPYEDESTSQHPFINPGFISPNGFTQSPDGVLTLKCLTPLTTTGGSLQLKVGGGLTIDDTDGFLKENISAATPLVKTGHSIGLSLGPGLGTNENKLCAKLGEGLTFNSNNICIDDNINTLWTGVNPTTANCQIMASSESNDCKLILTLVKTGGLVTAFVYVIGVSNDFNMLTTHKNINFTAELFFDSTGNLLTSLSSLKTPLNHKSGQNMATGALTNAKGFMPSTTAYPFNVNSREKENYIYGTCYYTASDHTAFPIDISVMLNQRALNNETSYCIRVTWSWNTGVAPEVQTSATTLVTSPFTFYYIREDD</sequence>
<keyword id="KW-0002">3D-structure</keyword>
<keyword id="KW-0167">Capsid protein</keyword>
<keyword id="KW-1048">Host nucleus</keyword>
<keyword id="KW-0945">Host-virus interaction</keyword>
<keyword id="KW-0426">Late protein</keyword>
<keyword id="KW-1233">Viral attachment to host adhesion receptor</keyword>
<keyword id="KW-1161">Viral attachment to host cell</keyword>
<keyword id="KW-0946">Virion</keyword>
<keyword id="KW-1160">Virus entry into host cell</keyword>